<proteinExistence type="inferred from homology"/>
<evidence type="ECO:0000255" key="1">
    <source>
        <dbReference type="HAMAP-Rule" id="MF_00330"/>
    </source>
</evidence>
<sequence>MKKTLMLLAMVVALVILPFFINHGGEYGGSDGEAESQIQAIEPQYKPWFQPLYEPASGEIESLLFTLQGSLGAAVIFYILGYCKGKQRRDDRA</sequence>
<accession>B5RBL2</accession>
<name>CBIN_SALG2</name>
<dbReference type="EMBL" id="AM933173">
    <property type="protein sequence ID" value="CAR37893.1"/>
    <property type="molecule type" value="Genomic_DNA"/>
</dbReference>
<dbReference type="RefSeq" id="WP_000753215.1">
    <property type="nucleotide sequence ID" value="NC_011274.1"/>
</dbReference>
<dbReference type="KEGG" id="seg:SG2047"/>
<dbReference type="HOGENOM" id="CLU_136197_2_0_6"/>
<dbReference type="UniPathway" id="UPA00148"/>
<dbReference type="Proteomes" id="UP000008321">
    <property type="component" value="Chromosome"/>
</dbReference>
<dbReference type="GO" id="GO:0005886">
    <property type="term" value="C:plasma membrane"/>
    <property type="evidence" value="ECO:0007669"/>
    <property type="project" value="UniProtKB-SubCell"/>
</dbReference>
<dbReference type="GO" id="GO:0015087">
    <property type="term" value="F:cobalt ion transmembrane transporter activity"/>
    <property type="evidence" value="ECO:0007669"/>
    <property type="project" value="UniProtKB-UniRule"/>
</dbReference>
<dbReference type="GO" id="GO:0009236">
    <property type="term" value="P:cobalamin biosynthetic process"/>
    <property type="evidence" value="ECO:0007669"/>
    <property type="project" value="UniProtKB-UniRule"/>
</dbReference>
<dbReference type="HAMAP" id="MF_00330">
    <property type="entry name" value="CbiN"/>
    <property type="match status" value="1"/>
</dbReference>
<dbReference type="InterPro" id="IPR003705">
    <property type="entry name" value="CbiN"/>
</dbReference>
<dbReference type="NCBIfam" id="TIGR01165">
    <property type="entry name" value="cbiN"/>
    <property type="match status" value="1"/>
</dbReference>
<dbReference type="NCBIfam" id="NF002780">
    <property type="entry name" value="PRK02898.1"/>
    <property type="match status" value="1"/>
</dbReference>
<dbReference type="PANTHER" id="PTHR38662">
    <property type="entry name" value="COBALT TRANSPORT PROTEIN CBIN"/>
    <property type="match status" value="1"/>
</dbReference>
<dbReference type="PANTHER" id="PTHR38662:SF1">
    <property type="entry name" value="COBALT TRANSPORT PROTEIN CBIN"/>
    <property type="match status" value="1"/>
</dbReference>
<dbReference type="Pfam" id="PF02553">
    <property type="entry name" value="CbiN"/>
    <property type="match status" value="1"/>
</dbReference>
<protein>
    <recommendedName>
        <fullName evidence="1">Cobalt transport protein CbiN</fullName>
    </recommendedName>
    <alternativeName>
        <fullName evidence="1">Energy-coupling factor transporter probable substrate-capture protein CbiN</fullName>
        <shortName evidence="1">ECF transporter S component CbiN</shortName>
    </alternativeName>
</protein>
<comment type="function">
    <text evidence="1">Part of the energy-coupling factor (ECF) transporter complex CbiMNOQ involved in cobalt import.</text>
</comment>
<comment type="pathway">
    <text evidence="1">Cofactor biosynthesis; adenosylcobalamin biosynthesis.</text>
</comment>
<comment type="subunit">
    <text evidence="1">Forms an energy-coupling factor (ECF) transporter complex composed of an ATP-binding protein (A component, CbiO), a transmembrane protein (T component, CbiQ) and 2 possible substrate-capture proteins (S components, CbiM and CbiN) of unknown stoichimetry.</text>
</comment>
<comment type="subcellular location">
    <subcellularLocation>
        <location evidence="1">Cell inner membrane</location>
        <topology evidence="1">Multi-pass membrane protein</topology>
    </subcellularLocation>
</comment>
<comment type="similarity">
    <text evidence="1">Belongs to the CbiN family.</text>
</comment>
<keyword id="KW-0997">Cell inner membrane</keyword>
<keyword id="KW-1003">Cell membrane</keyword>
<keyword id="KW-0169">Cobalamin biosynthesis</keyword>
<keyword id="KW-0170">Cobalt</keyword>
<keyword id="KW-0171">Cobalt transport</keyword>
<keyword id="KW-0406">Ion transport</keyword>
<keyword id="KW-0472">Membrane</keyword>
<keyword id="KW-0812">Transmembrane</keyword>
<keyword id="KW-1133">Transmembrane helix</keyword>
<keyword id="KW-0813">Transport</keyword>
<reference key="1">
    <citation type="journal article" date="2008" name="Genome Res.">
        <title>Comparative genome analysis of Salmonella enteritidis PT4 and Salmonella gallinarum 287/91 provides insights into evolutionary and host adaptation pathways.</title>
        <authorList>
            <person name="Thomson N.R."/>
            <person name="Clayton D.J."/>
            <person name="Windhorst D."/>
            <person name="Vernikos G."/>
            <person name="Davidson S."/>
            <person name="Churcher C."/>
            <person name="Quail M.A."/>
            <person name="Stevens M."/>
            <person name="Jones M.A."/>
            <person name="Watson M."/>
            <person name="Barron A."/>
            <person name="Layton A."/>
            <person name="Pickard D."/>
            <person name="Kingsley R.A."/>
            <person name="Bignell A."/>
            <person name="Clark L."/>
            <person name="Harris B."/>
            <person name="Ormond D."/>
            <person name="Abdellah Z."/>
            <person name="Brooks K."/>
            <person name="Cherevach I."/>
            <person name="Chillingworth T."/>
            <person name="Woodward J."/>
            <person name="Norberczak H."/>
            <person name="Lord A."/>
            <person name="Arrowsmith C."/>
            <person name="Jagels K."/>
            <person name="Moule S."/>
            <person name="Mungall K."/>
            <person name="Saunders M."/>
            <person name="Whitehead S."/>
            <person name="Chabalgoity J.A."/>
            <person name="Maskell D."/>
            <person name="Humphreys T."/>
            <person name="Roberts M."/>
            <person name="Barrow P.A."/>
            <person name="Dougan G."/>
            <person name="Parkhill J."/>
        </authorList>
    </citation>
    <scope>NUCLEOTIDE SEQUENCE [LARGE SCALE GENOMIC DNA]</scope>
    <source>
        <strain>287/91 / NCTC 13346</strain>
    </source>
</reference>
<organism>
    <name type="scientific">Salmonella gallinarum (strain 287/91 / NCTC 13346)</name>
    <dbReference type="NCBI Taxonomy" id="550538"/>
    <lineage>
        <taxon>Bacteria</taxon>
        <taxon>Pseudomonadati</taxon>
        <taxon>Pseudomonadota</taxon>
        <taxon>Gammaproteobacteria</taxon>
        <taxon>Enterobacterales</taxon>
        <taxon>Enterobacteriaceae</taxon>
        <taxon>Salmonella</taxon>
    </lineage>
</organism>
<gene>
    <name evidence="1" type="primary">cbiN</name>
    <name type="ordered locus">SG2047</name>
</gene>
<feature type="chain" id="PRO_1000116112" description="Cobalt transport protein CbiN">
    <location>
        <begin position="1"/>
        <end position="93"/>
    </location>
</feature>
<feature type="transmembrane region" description="Helical" evidence="1">
    <location>
        <begin position="5"/>
        <end position="25"/>
    </location>
</feature>
<feature type="transmembrane region" description="Helical" evidence="1">
    <location>
        <begin position="63"/>
        <end position="83"/>
    </location>
</feature>